<gene>
    <name evidence="1" type="primary">rpsB</name>
    <name type="ordered locus">SSU05_1980</name>
</gene>
<organism>
    <name type="scientific">Streptococcus suis (strain 05ZYH33)</name>
    <dbReference type="NCBI Taxonomy" id="391295"/>
    <lineage>
        <taxon>Bacteria</taxon>
        <taxon>Bacillati</taxon>
        <taxon>Bacillota</taxon>
        <taxon>Bacilli</taxon>
        <taxon>Lactobacillales</taxon>
        <taxon>Streptococcaceae</taxon>
        <taxon>Streptococcus</taxon>
    </lineage>
</organism>
<protein>
    <recommendedName>
        <fullName evidence="1">Small ribosomal subunit protein uS2</fullName>
    </recommendedName>
    <alternativeName>
        <fullName evidence="2">30S ribosomal protein S2</fullName>
    </alternativeName>
</protein>
<proteinExistence type="inferred from homology"/>
<sequence>MAVISMKQLLEAGVHFGHQTRRWNPKMAKYIFTERNGIHVIDLQQTVKLADQAYEFIRDAAANEAVILFVGTKKQAAEAVKDEAIRAGQYFINHRWLGGTLTNWGTIQKRIARLKEINRMEEDGTFEVLPKKEVALLNKQRARLEKFLGGIADMPRIPDVMFVVDPHKEQIAVKEAKKLGIPVVAMVDTNTDPDDIDVIIPANDDAIRAVKLITAKMADAIIEGNQGEDSVAAVEAELAAEPASTESIEELVEVVEGK</sequence>
<keyword id="KW-0687">Ribonucleoprotein</keyword>
<keyword id="KW-0689">Ribosomal protein</keyword>
<name>RS2_STRSY</name>
<reference key="1">
    <citation type="journal article" date="2007" name="PLoS ONE">
        <title>A glimpse of streptococcal toxic shock syndrome from comparative genomics of S. suis 2 Chinese isolates.</title>
        <authorList>
            <person name="Chen C."/>
            <person name="Tang J."/>
            <person name="Dong W."/>
            <person name="Wang C."/>
            <person name="Feng Y."/>
            <person name="Wang J."/>
            <person name="Zheng F."/>
            <person name="Pan X."/>
            <person name="Liu D."/>
            <person name="Li M."/>
            <person name="Song Y."/>
            <person name="Zhu X."/>
            <person name="Sun H."/>
            <person name="Feng T."/>
            <person name="Guo Z."/>
            <person name="Ju A."/>
            <person name="Ge J."/>
            <person name="Dong Y."/>
            <person name="Sun W."/>
            <person name="Jiang Y."/>
            <person name="Wang J."/>
            <person name="Yan J."/>
            <person name="Yang H."/>
            <person name="Wang X."/>
            <person name="Gao G.F."/>
            <person name="Yang R."/>
            <person name="Wang J."/>
            <person name="Yu J."/>
        </authorList>
    </citation>
    <scope>NUCLEOTIDE SEQUENCE [LARGE SCALE GENOMIC DNA]</scope>
    <source>
        <strain>05ZYH33</strain>
    </source>
</reference>
<dbReference type="EMBL" id="CP000407">
    <property type="protein sequence ID" value="ABP90946.1"/>
    <property type="status" value="ALT_INIT"/>
    <property type="molecule type" value="Genomic_DNA"/>
</dbReference>
<dbReference type="SMR" id="A4VXV7"/>
<dbReference type="STRING" id="391295.SSU05_1980"/>
<dbReference type="KEGG" id="ssu:SSU05_1980"/>
<dbReference type="eggNOG" id="COG0052">
    <property type="taxonomic scope" value="Bacteria"/>
</dbReference>
<dbReference type="HOGENOM" id="CLU_040318_1_2_9"/>
<dbReference type="GO" id="GO:0022627">
    <property type="term" value="C:cytosolic small ribosomal subunit"/>
    <property type="evidence" value="ECO:0007669"/>
    <property type="project" value="TreeGrafter"/>
</dbReference>
<dbReference type="GO" id="GO:0003735">
    <property type="term" value="F:structural constituent of ribosome"/>
    <property type="evidence" value="ECO:0007669"/>
    <property type="project" value="InterPro"/>
</dbReference>
<dbReference type="GO" id="GO:0006412">
    <property type="term" value="P:translation"/>
    <property type="evidence" value="ECO:0007669"/>
    <property type="project" value="UniProtKB-UniRule"/>
</dbReference>
<dbReference type="CDD" id="cd01425">
    <property type="entry name" value="RPS2"/>
    <property type="match status" value="1"/>
</dbReference>
<dbReference type="FunFam" id="1.10.287.610:FF:000001">
    <property type="entry name" value="30S ribosomal protein S2"/>
    <property type="match status" value="1"/>
</dbReference>
<dbReference type="Gene3D" id="3.40.50.10490">
    <property type="entry name" value="Glucose-6-phosphate isomerase like protein, domain 1"/>
    <property type="match status" value="1"/>
</dbReference>
<dbReference type="Gene3D" id="1.10.287.610">
    <property type="entry name" value="Helix hairpin bin"/>
    <property type="match status" value="1"/>
</dbReference>
<dbReference type="HAMAP" id="MF_00291_B">
    <property type="entry name" value="Ribosomal_uS2_B"/>
    <property type="match status" value="1"/>
</dbReference>
<dbReference type="InterPro" id="IPR001865">
    <property type="entry name" value="Ribosomal_uS2"/>
</dbReference>
<dbReference type="InterPro" id="IPR005706">
    <property type="entry name" value="Ribosomal_uS2_bac/mit/plastid"/>
</dbReference>
<dbReference type="InterPro" id="IPR018130">
    <property type="entry name" value="Ribosomal_uS2_CS"/>
</dbReference>
<dbReference type="InterPro" id="IPR023591">
    <property type="entry name" value="Ribosomal_uS2_flav_dom_sf"/>
</dbReference>
<dbReference type="NCBIfam" id="TIGR01011">
    <property type="entry name" value="rpsB_bact"/>
    <property type="match status" value="1"/>
</dbReference>
<dbReference type="PANTHER" id="PTHR12534">
    <property type="entry name" value="30S RIBOSOMAL PROTEIN S2 PROKARYOTIC AND ORGANELLAR"/>
    <property type="match status" value="1"/>
</dbReference>
<dbReference type="PANTHER" id="PTHR12534:SF0">
    <property type="entry name" value="SMALL RIBOSOMAL SUBUNIT PROTEIN US2M"/>
    <property type="match status" value="1"/>
</dbReference>
<dbReference type="Pfam" id="PF00318">
    <property type="entry name" value="Ribosomal_S2"/>
    <property type="match status" value="1"/>
</dbReference>
<dbReference type="PRINTS" id="PR00395">
    <property type="entry name" value="RIBOSOMALS2"/>
</dbReference>
<dbReference type="SUPFAM" id="SSF52313">
    <property type="entry name" value="Ribosomal protein S2"/>
    <property type="match status" value="1"/>
</dbReference>
<dbReference type="PROSITE" id="PS00962">
    <property type="entry name" value="RIBOSOMAL_S2_1"/>
    <property type="match status" value="1"/>
</dbReference>
<dbReference type="PROSITE" id="PS00963">
    <property type="entry name" value="RIBOSOMAL_S2_2"/>
    <property type="match status" value="1"/>
</dbReference>
<feature type="chain" id="PRO_0000352041" description="Small ribosomal subunit protein uS2">
    <location>
        <begin position="1"/>
        <end position="258"/>
    </location>
</feature>
<accession>A4VXV7</accession>
<comment type="similarity">
    <text evidence="1">Belongs to the universal ribosomal protein uS2 family.</text>
</comment>
<comment type="sequence caution" evidence="2">
    <conflict type="erroneous initiation">
        <sequence resource="EMBL-CDS" id="ABP90946"/>
    </conflict>
</comment>
<evidence type="ECO:0000255" key="1">
    <source>
        <dbReference type="HAMAP-Rule" id="MF_00291"/>
    </source>
</evidence>
<evidence type="ECO:0000305" key="2"/>